<accession>Q8KC25</accession>
<organism>
    <name type="scientific">Chlorobaculum tepidum (strain ATCC 49652 / DSM 12025 / NBRC 103806 / TLS)</name>
    <name type="common">Chlorobium tepidum</name>
    <dbReference type="NCBI Taxonomy" id="194439"/>
    <lineage>
        <taxon>Bacteria</taxon>
        <taxon>Pseudomonadati</taxon>
        <taxon>Chlorobiota</taxon>
        <taxon>Chlorobiia</taxon>
        <taxon>Chlorobiales</taxon>
        <taxon>Chlorobiaceae</taxon>
        <taxon>Chlorobaculum</taxon>
    </lineage>
</organism>
<sequence>MRIGIGIDVHQFAEGRKLIIGGVEVPSPIGLLGHSDADVLLHAISDALLGAAALGDIGKHFPDTSPDYKDADSMELLRHVCKLLEQEGYKPVNVDTMLLLEKPKIAPYIDQMRRNIARCLGLEINAVSVKATTNEKLGYVGRQEGACAHAVCLIENA</sequence>
<gene>
    <name evidence="1" type="primary">ispF</name>
    <name type="ordered locus">CT1601</name>
</gene>
<evidence type="ECO:0000255" key="1">
    <source>
        <dbReference type="HAMAP-Rule" id="MF_00107"/>
    </source>
</evidence>
<name>ISPF_CHLTE</name>
<keyword id="KW-0414">Isoprene biosynthesis</keyword>
<keyword id="KW-0456">Lyase</keyword>
<keyword id="KW-0479">Metal-binding</keyword>
<keyword id="KW-1185">Reference proteome</keyword>
<dbReference type="EC" id="4.6.1.12" evidence="1"/>
<dbReference type="EMBL" id="AE006470">
    <property type="protein sequence ID" value="AAM72826.1"/>
    <property type="molecule type" value="Genomic_DNA"/>
</dbReference>
<dbReference type="RefSeq" id="NP_662484.1">
    <property type="nucleotide sequence ID" value="NC_002932.3"/>
</dbReference>
<dbReference type="RefSeq" id="WP_010933265.1">
    <property type="nucleotide sequence ID" value="NC_002932.3"/>
</dbReference>
<dbReference type="SMR" id="Q8KC25"/>
<dbReference type="STRING" id="194439.CT1601"/>
<dbReference type="EnsemblBacteria" id="AAM72826">
    <property type="protein sequence ID" value="AAM72826"/>
    <property type="gene ID" value="CT1601"/>
</dbReference>
<dbReference type="KEGG" id="cte:CT1601"/>
<dbReference type="PATRIC" id="fig|194439.7.peg.1447"/>
<dbReference type="eggNOG" id="COG0245">
    <property type="taxonomic scope" value="Bacteria"/>
</dbReference>
<dbReference type="HOGENOM" id="CLU_084630_2_0_10"/>
<dbReference type="OrthoDB" id="9804336at2"/>
<dbReference type="UniPathway" id="UPA00056">
    <property type="reaction ID" value="UER00095"/>
</dbReference>
<dbReference type="Proteomes" id="UP000001007">
    <property type="component" value="Chromosome"/>
</dbReference>
<dbReference type="GO" id="GO:0008685">
    <property type="term" value="F:2-C-methyl-D-erythritol 2,4-cyclodiphosphate synthase activity"/>
    <property type="evidence" value="ECO:0007669"/>
    <property type="project" value="UniProtKB-UniRule"/>
</dbReference>
<dbReference type="GO" id="GO:0046872">
    <property type="term" value="F:metal ion binding"/>
    <property type="evidence" value="ECO:0007669"/>
    <property type="project" value="UniProtKB-KW"/>
</dbReference>
<dbReference type="GO" id="GO:0019288">
    <property type="term" value="P:isopentenyl diphosphate biosynthetic process, methylerythritol 4-phosphate pathway"/>
    <property type="evidence" value="ECO:0007669"/>
    <property type="project" value="UniProtKB-UniRule"/>
</dbReference>
<dbReference type="GO" id="GO:0016114">
    <property type="term" value="P:terpenoid biosynthetic process"/>
    <property type="evidence" value="ECO:0007669"/>
    <property type="project" value="InterPro"/>
</dbReference>
<dbReference type="CDD" id="cd00554">
    <property type="entry name" value="MECDP_synthase"/>
    <property type="match status" value="1"/>
</dbReference>
<dbReference type="FunFam" id="3.30.1330.50:FF:000001">
    <property type="entry name" value="2-C-methyl-D-erythritol 2,4-cyclodiphosphate synthase"/>
    <property type="match status" value="1"/>
</dbReference>
<dbReference type="Gene3D" id="3.30.1330.50">
    <property type="entry name" value="2-C-methyl-D-erythritol 2,4-cyclodiphosphate synthase"/>
    <property type="match status" value="1"/>
</dbReference>
<dbReference type="HAMAP" id="MF_00107">
    <property type="entry name" value="IspF"/>
    <property type="match status" value="1"/>
</dbReference>
<dbReference type="InterPro" id="IPR003526">
    <property type="entry name" value="MECDP_synthase"/>
</dbReference>
<dbReference type="InterPro" id="IPR020555">
    <property type="entry name" value="MECDP_synthase_CS"/>
</dbReference>
<dbReference type="InterPro" id="IPR036571">
    <property type="entry name" value="MECDP_synthase_sf"/>
</dbReference>
<dbReference type="NCBIfam" id="TIGR00151">
    <property type="entry name" value="ispF"/>
    <property type="match status" value="1"/>
</dbReference>
<dbReference type="PANTHER" id="PTHR43181">
    <property type="entry name" value="2-C-METHYL-D-ERYTHRITOL 2,4-CYCLODIPHOSPHATE SYNTHASE, CHLOROPLASTIC"/>
    <property type="match status" value="1"/>
</dbReference>
<dbReference type="PANTHER" id="PTHR43181:SF1">
    <property type="entry name" value="2-C-METHYL-D-ERYTHRITOL 2,4-CYCLODIPHOSPHATE SYNTHASE, CHLOROPLASTIC"/>
    <property type="match status" value="1"/>
</dbReference>
<dbReference type="Pfam" id="PF02542">
    <property type="entry name" value="YgbB"/>
    <property type="match status" value="1"/>
</dbReference>
<dbReference type="SUPFAM" id="SSF69765">
    <property type="entry name" value="IpsF-like"/>
    <property type="match status" value="1"/>
</dbReference>
<dbReference type="PROSITE" id="PS01350">
    <property type="entry name" value="ISPF"/>
    <property type="match status" value="1"/>
</dbReference>
<protein>
    <recommendedName>
        <fullName evidence="1">2-C-methyl-D-erythritol 2,4-cyclodiphosphate synthase</fullName>
        <shortName evidence="1">MECDP-synthase</shortName>
        <shortName evidence="1">MECPP-synthase</shortName>
        <shortName evidence="1">MECPS</shortName>
        <ecNumber evidence="1">4.6.1.12</ecNumber>
    </recommendedName>
</protein>
<comment type="function">
    <text evidence="1">Involved in the biosynthesis of isopentenyl diphosphate (IPP) and dimethylallyl diphosphate (DMAPP), two major building blocks of isoprenoid compounds. Catalyzes the conversion of 4-diphosphocytidyl-2-C-methyl-D-erythritol 2-phosphate (CDP-ME2P) to 2-C-methyl-D-erythritol 2,4-cyclodiphosphate (ME-CPP) with a corresponding release of cytidine 5-monophosphate (CMP).</text>
</comment>
<comment type="catalytic activity">
    <reaction evidence="1">
        <text>4-CDP-2-C-methyl-D-erythritol 2-phosphate = 2-C-methyl-D-erythritol 2,4-cyclic diphosphate + CMP</text>
        <dbReference type="Rhea" id="RHEA:23864"/>
        <dbReference type="ChEBI" id="CHEBI:57919"/>
        <dbReference type="ChEBI" id="CHEBI:58483"/>
        <dbReference type="ChEBI" id="CHEBI:60377"/>
        <dbReference type="EC" id="4.6.1.12"/>
    </reaction>
</comment>
<comment type="cofactor">
    <cofactor evidence="1">
        <name>a divalent metal cation</name>
        <dbReference type="ChEBI" id="CHEBI:60240"/>
    </cofactor>
    <text evidence="1">Binds 1 divalent metal cation per subunit.</text>
</comment>
<comment type="pathway">
    <text evidence="1">Isoprenoid biosynthesis; isopentenyl diphosphate biosynthesis via DXP pathway; isopentenyl diphosphate from 1-deoxy-D-xylulose 5-phosphate: step 4/6.</text>
</comment>
<comment type="subunit">
    <text evidence="1">Homotrimer.</text>
</comment>
<comment type="similarity">
    <text evidence="1">Belongs to the IspF family.</text>
</comment>
<reference key="1">
    <citation type="journal article" date="2002" name="Proc. Natl. Acad. Sci. U.S.A.">
        <title>The complete genome sequence of Chlorobium tepidum TLS, a photosynthetic, anaerobic, green-sulfur bacterium.</title>
        <authorList>
            <person name="Eisen J.A."/>
            <person name="Nelson K.E."/>
            <person name="Paulsen I.T."/>
            <person name="Heidelberg J.F."/>
            <person name="Wu M."/>
            <person name="Dodson R.J."/>
            <person name="DeBoy R.T."/>
            <person name="Gwinn M.L."/>
            <person name="Nelson W.C."/>
            <person name="Haft D.H."/>
            <person name="Hickey E.K."/>
            <person name="Peterson J.D."/>
            <person name="Durkin A.S."/>
            <person name="Kolonay J.F."/>
            <person name="Yang F."/>
            <person name="Holt I.E."/>
            <person name="Umayam L.A."/>
            <person name="Mason T.M."/>
            <person name="Brenner M."/>
            <person name="Shea T.P."/>
            <person name="Parksey D.S."/>
            <person name="Nierman W.C."/>
            <person name="Feldblyum T.V."/>
            <person name="Hansen C.L."/>
            <person name="Craven M.B."/>
            <person name="Radune D."/>
            <person name="Vamathevan J.J."/>
            <person name="Khouri H.M."/>
            <person name="White O."/>
            <person name="Gruber T.M."/>
            <person name="Ketchum K.A."/>
            <person name="Venter J.C."/>
            <person name="Tettelin H."/>
            <person name="Bryant D.A."/>
            <person name="Fraser C.M."/>
        </authorList>
    </citation>
    <scope>NUCLEOTIDE SEQUENCE [LARGE SCALE GENOMIC DNA]</scope>
    <source>
        <strain>ATCC 49652 / DSM 12025 / NBRC 103806 / TLS</strain>
    </source>
</reference>
<feature type="chain" id="PRO_0000189454" description="2-C-methyl-D-erythritol 2,4-cyclodiphosphate synthase">
    <location>
        <begin position="1"/>
        <end position="157"/>
    </location>
</feature>
<feature type="binding site" evidence="1">
    <location>
        <begin position="8"/>
        <end position="10"/>
    </location>
    <ligand>
        <name>4-CDP-2-C-methyl-D-erythritol 2-phosphate</name>
        <dbReference type="ChEBI" id="CHEBI:57919"/>
    </ligand>
</feature>
<feature type="binding site" evidence="1">
    <location>
        <position position="8"/>
    </location>
    <ligand>
        <name>a divalent metal cation</name>
        <dbReference type="ChEBI" id="CHEBI:60240"/>
    </ligand>
</feature>
<feature type="binding site" evidence="1">
    <location>
        <position position="10"/>
    </location>
    <ligand>
        <name>a divalent metal cation</name>
        <dbReference type="ChEBI" id="CHEBI:60240"/>
    </ligand>
</feature>
<feature type="binding site" evidence="1">
    <location>
        <begin position="34"/>
        <end position="35"/>
    </location>
    <ligand>
        <name>4-CDP-2-C-methyl-D-erythritol 2-phosphate</name>
        <dbReference type="ChEBI" id="CHEBI:57919"/>
    </ligand>
</feature>
<feature type="binding site" evidence="1">
    <location>
        <position position="42"/>
    </location>
    <ligand>
        <name>a divalent metal cation</name>
        <dbReference type="ChEBI" id="CHEBI:60240"/>
    </ligand>
</feature>
<feature type="binding site" evidence="1">
    <location>
        <begin position="56"/>
        <end position="58"/>
    </location>
    <ligand>
        <name>4-CDP-2-C-methyl-D-erythritol 2-phosphate</name>
        <dbReference type="ChEBI" id="CHEBI:57919"/>
    </ligand>
</feature>
<feature type="binding site" evidence="1">
    <location>
        <begin position="132"/>
        <end position="135"/>
    </location>
    <ligand>
        <name>4-CDP-2-C-methyl-D-erythritol 2-phosphate</name>
        <dbReference type="ChEBI" id="CHEBI:57919"/>
    </ligand>
</feature>
<feature type="binding site" evidence="1">
    <location>
        <position position="142"/>
    </location>
    <ligand>
        <name>4-CDP-2-C-methyl-D-erythritol 2-phosphate</name>
        <dbReference type="ChEBI" id="CHEBI:57919"/>
    </ligand>
</feature>
<feature type="site" description="Transition state stabilizer" evidence="1">
    <location>
        <position position="34"/>
    </location>
</feature>
<feature type="site" description="Transition state stabilizer" evidence="1">
    <location>
        <position position="133"/>
    </location>
</feature>
<proteinExistence type="inferred from homology"/>